<proteinExistence type="inferred from homology"/>
<keyword id="KW-0997">Cell inner membrane</keyword>
<keyword id="KW-1003">Cell membrane</keyword>
<keyword id="KW-0169">Cobalamin biosynthesis</keyword>
<keyword id="KW-0460">Magnesium</keyword>
<keyword id="KW-0472">Membrane</keyword>
<keyword id="KW-1185">Reference proteome</keyword>
<keyword id="KW-0808">Transferase</keyword>
<keyword id="KW-0812">Transmembrane</keyword>
<keyword id="KW-1133">Transmembrane helix</keyword>
<evidence type="ECO:0000255" key="1">
    <source>
        <dbReference type="HAMAP-Rule" id="MF_00719"/>
    </source>
</evidence>
<accession>Q3Z0K3</accession>
<gene>
    <name evidence="1" type="primary">cobS</name>
    <name type="ordered locus">SSON_2053</name>
</gene>
<feature type="chain" id="PRO_1000045814" description="Adenosylcobinamide-GDP ribazoletransferase">
    <location>
        <begin position="1"/>
        <end position="247"/>
    </location>
</feature>
<feature type="transmembrane region" description="Helical" evidence="1">
    <location>
        <begin position="34"/>
        <end position="54"/>
    </location>
</feature>
<feature type="transmembrane region" description="Helical" evidence="1">
    <location>
        <begin position="59"/>
        <end position="79"/>
    </location>
</feature>
<feature type="transmembrane region" description="Helical" evidence="1">
    <location>
        <begin position="113"/>
        <end position="133"/>
    </location>
</feature>
<feature type="transmembrane region" description="Helical" evidence="1">
    <location>
        <begin position="138"/>
        <end position="158"/>
    </location>
</feature>
<feature type="transmembrane region" description="Helical" evidence="1">
    <location>
        <begin position="194"/>
        <end position="214"/>
    </location>
</feature>
<organism>
    <name type="scientific">Shigella sonnei (strain Ss046)</name>
    <dbReference type="NCBI Taxonomy" id="300269"/>
    <lineage>
        <taxon>Bacteria</taxon>
        <taxon>Pseudomonadati</taxon>
        <taxon>Pseudomonadota</taxon>
        <taxon>Gammaproteobacteria</taxon>
        <taxon>Enterobacterales</taxon>
        <taxon>Enterobacteriaceae</taxon>
        <taxon>Shigella</taxon>
    </lineage>
</organism>
<name>COBS_SHISS</name>
<reference key="1">
    <citation type="journal article" date="2005" name="Nucleic Acids Res.">
        <title>Genome dynamics and diversity of Shigella species, the etiologic agents of bacillary dysentery.</title>
        <authorList>
            <person name="Yang F."/>
            <person name="Yang J."/>
            <person name="Zhang X."/>
            <person name="Chen L."/>
            <person name="Jiang Y."/>
            <person name="Yan Y."/>
            <person name="Tang X."/>
            <person name="Wang J."/>
            <person name="Xiong Z."/>
            <person name="Dong J."/>
            <person name="Xue Y."/>
            <person name="Zhu Y."/>
            <person name="Xu X."/>
            <person name="Sun L."/>
            <person name="Chen S."/>
            <person name="Nie H."/>
            <person name="Peng J."/>
            <person name="Xu J."/>
            <person name="Wang Y."/>
            <person name="Yuan Z."/>
            <person name="Wen Y."/>
            <person name="Yao Z."/>
            <person name="Shen Y."/>
            <person name="Qiang B."/>
            <person name="Hou Y."/>
            <person name="Yu J."/>
            <person name="Jin Q."/>
        </authorList>
    </citation>
    <scope>NUCLEOTIDE SEQUENCE [LARGE SCALE GENOMIC DNA]</scope>
    <source>
        <strain>Ss046</strain>
    </source>
</reference>
<sequence length="247" mass="26396">MSKLFWAMLSFITRLPVPRRWSQGLDFEHYSRGIITFPLIGLLLGAISGLVFMVLQAWCGVPLAALFSVLVLALMTGGFHLDGLADTCDGVFSARSRDRMLEIMRDSRLGTHGGLALIFVVLAKILVLSELALRGEPILASLAAACAVSRGTAALLMYRHRYAREEGLGNVFIGKIDGRQTCVTLGLAAIFAAVLLPGMHGVAAMVVTMVAIFILGQLLKRTLGGQTGDTLGAAIELGELVFLLALL</sequence>
<protein>
    <recommendedName>
        <fullName evidence="1">Adenosylcobinamide-GDP ribazoletransferase</fullName>
        <ecNumber evidence="1">2.7.8.26</ecNumber>
    </recommendedName>
    <alternativeName>
        <fullName evidence="1">Cobalamin synthase</fullName>
    </alternativeName>
    <alternativeName>
        <fullName evidence="1">Cobalamin-5'-phosphate synthase</fullName>
    </alternativeName>
</protein>
<comment type="function">
    <text evidence="1">Joins adenosylcobinamide-GDP and alpha-ribazole to generate adenosylcobalamin (Ado-cobalamin). Also synthesizes adenosylcobalamin 5'-phosphate from adenosylcobinamide-GDP and alpha-ribazole 5'-phosphate.</text>
</comment>
<comment type="catalytic activity">
    <reaction evidence="1">
        <text>alpha-ribazole + adenosylcob(III)inamide-GDP = adenosylcob(III)alamin + GMP + H(+)</text>
        <dbReference type="Rhea" id="RHEA:16049"/>
        <dbReference type="ChEBI" id="CHEBI:10329"/>
        <dbReference type="ChEBI" id="CHEBI:15378"/>
        <dbReference type="ChEBI" id="CHEBI:18408"/>
        <dbReference type="ChEBI" id="CHEBI:58115"/>
        <dbReference type="ChEBI" id="CHEBI:60487"/>
        <dbReference type="EC" id="2.7.8.26"/>
    </reaction>
</comment>
<comment type="catalytic activity">
    <reaction evidence="1">
        <text>alpha-ribazole 5'-phosphate + adenosylcob(III)inamide-GDP = adenosylcob(III)alamin 5'-phosphate + GMP + H(+)</text>
        <dbReference type="Rhea" id="RHEA:23560"/>
        <dbReference type="ChEBI" id="CHEBI:15378"/>
        <dbReference type="ChEBI" id="CHEBI:57918"/>
        <dbReference type="ChEBI" id="CHEBI:58115"/>
        <dbReference type="ChEBI" id="CHEBI:60487"/>
        <dbReference type="ChEBI" id="CHEBI:60493"/>
        <dbReference type="EC" id="2.7.8.26"/>
    </reaction>
</comment>
<comment type="cofactor">
    <cofactor evidence="1">
        <name>Mg(2+)</name>
        <dbReference type="ChEBI" id="CHEBI:18420"/>
    </cofactor>
</comment>
<comment type="pathway">
    <text evidence="1">Cofactor biosynthesis; adenosylcobalamin biosynthesis; adenosylcobalamin from cob(II)yrinate a,c-diamide: step 7/7.</text>
</comment>
<comment type="subcellular location">
    <subcellularLocation>
        <location evidence="1">Cell inner membrane</location>
        <topology evidence="1">Multi-pass membrane protein</topology>
    </subcellularLocation>
</comment>
<comment type="similarity">
    <text evidence="1">Belongs to the CobS family.</text>
</comment>
<dbReference type="EC" id="2.7.8.26" evidence="1"/>
<dbReference type="EMBL" id="CP000038">
    <property type="protein sequence ID" value="AAZ88709.1"/>
    <property type="molecule type" value="Genomic_DNA"/>
</dbReference>
<dbReference type="RefSeq" id="WP_001297350.1">
    <property type="nucleotide sequence ID" value="NC_007384.1"/>
</dbReference>
<dbReference type="GeneID" id="93775192"/>
<dbReference type="KEGG" id="ssn:SSON_2053"/>
<dbReference type="HOGENOM" id="CLU_057426_1_1_6"/>
<dbReference type="UniPathway" id="UPA00148">
    <property type="reaction ID" value="UER00238"/>
</dbReference>
<dbReference type="Proteomes" id="UP000002529">
    <property type="component" value="Chromosome"/>
</dbReference>
<dbReference type="GO" id="GO:0005886">
    <property type="term" value="C:plasma membrane"/>
    <property type="evidence" value="ECO:0007669"/>
    <property type="project" value="UniProtKB-SubCell"/>
</dbReference>
<dbReference type="GO" id="GO:0051073">
    <property type="term" value="F:adenosylcobinamide-GDP ribazoletransferase activity"/>
    <property type="evidence" value="ECO:0007669"/>
    <property type="project" value="UniProtKB-UniRule"/>
</dbReference>
<dbReference type="GO" id="GO:0008818">
    <property type="term" value="F:cobalamin 5'-phosphate synthase activity"/>
    <property type="evidence" value="ECO:0007669"/>
    <property type="project" value="UniProtKB-UniRule"/>
</dbReference>
<dbReference type="GO" id="GO:0009236">
    <property type="term" value="P:cobalamin biosynthetic process"/>
    <property type="evidence" value="ECO:0007669"/>
    <property type="project" value="UniProtKB-UniRule"/>
</dbReference>
<dbReference type="HAMAP" id="MF_00719">
    <property type="entry name" value="CobS"/>
    <property type="match status" value="1"/>
</dbReference>
<dbReference type="InterPro" id="IPR003805">
    <property type="entry name" value="CobS"/>
</dbReference>
<dbReference type="NCBIfam" id="TIGR00317">
    <property type="entry name" value="cobS"/>
    <property type="match status" value="1"/>
</dbReference>
<dbReference type="PANTHER" id="PTHR34148">
    <property type="entry name" value="ADENOSYLCOBINAMIDE-GDP RIBAZOLETRANSFERASE"/>
    <property type="match status" value="1"/>
</dbReference>
<dbReference type="PANTHER" id="PTHR34148:SF1">
    <property type="entry name" value="ADENOSYLCOBINAMIDE-GDP RIBAZOLETRANSFERASE"/>
    <property type="match status" value="1"/>
</dbReference>
<dbReference type="Pfam" id="PF02654">
    <property type="entry name" value="CobS"/>
    <property type="match status" value="1"/>
</dbReference>